<accession>Q7CLW2</accession>
<keyword id="KW-1003">Cell membrane</keyword>
<keyword id="KW-0472">Membrane</keyword>
<keyword id="KW-1185">Reference proteome</keyword>
<keyword id="KW-0812">Transmembrane</keyword>
<keyword id="KW-1133">Transmembrane helix</keyword>
<protein>
    <recommendedName>
        <fullName evidence="1">UPF0391 membrane protein XCC0220</fullName>
    </recommendedName>
</protein>
<feature type="chain" id="PRO_0000256798" description="UPF0391 membrane protein XCC0220">
    <location>
        <begin position="1"/>
        <end position="52"/>
    </location>
</feature>
<feature type="transmembrane region" description="Helical" evidence="1">
    <location>
        <begin position="5"/>
        <end position="25"/>
    </location>
</feature>
<feature type="transmembrane region" description="Helical" evidence="1">
    <location>
        <begin position="27"/>
        <end position="47"/>
    </location>
</feature>
<proteinExistence type="inferred from homology"/>
<reference key="1">
    <citation type="journal article" date="2002" name="Nature">
        <title>Comparison of the genomes of two Xanthomonas pathogens with differing host specificities.</title>
        <authorList>
            <person name="da Silva A.C.R."/>
            <person name="Ferro J.A."/>
            <person name="Reinach F.C."/>
            <person name="Farah C.S."/>
            <person name="Furlan L.R."/>
            <person name="Quaggio R.B."/>
            <person name="Monteiro-Vitorello C.B."/>
            <person name="Van Sluys M.A."/>
            <person name="Almeida N.F. Jr."/>
            <person name="Alves L.M.C."/>
            <person name="do Amaral A.M."/>
            <person name="Bertolini M.C."/>
            <person name="Camargo L.E.A."/>
            <person name="Camarotte G."/>
            <person name="Cannavan F."/>
            <person name="Cardozo J."/>
            <person name="Chambergo F."/>
            <person name="Ciapina L.P."/>
            <person name="Cicarelli R.M.B."/>
            <person name="Coutinho L.L."/>
            <person name="Cursino-Santos J.R."/>
            <person name="El-Dorry H."/>
            <person name="Faria J.B."/>
            <person name="Ferreira A.J.S."/>
            <person name="Ferreira R.C.C."/>
            <person name="Ferro M.I.T."/>
            <person name="Formighieri E.F."/>
            <person name="Franco M.C."/>
            <person name="Greggio C.C."/>
            <person name="Gruber A."/>
            <person name="Katsuyama A.M."/>
            <person name="Kishi L.T."/>
            <person name="Leite R.P."/>
            <person name="Lemos E.G.M."/>
            <person name="Lemos M.V.F."/>
            <person name="Locali E.C."/>
            <person name="Machado M.A."/>
            <person name="Madeira A.M.B.N."/>
            <person name="Martinez-Rossi N.M."/>
            <person name="Martins E.C."/>
            <person name="Meidanis J."/>
            <person name="Menck C.F.M."/>
            <person name="Miyaki C.Y."/>
            <person name="Moon D.H."/>
            <person name="Moreira L.M."/>
            <person name="Novo M.T.M."/>
            <person name="Okura V.K."/>
            <person name="Oliveira M.C."/>
            <person name="Oliveira V.R."/>
            <person name="Pereira H.A."/>
            <person name="Rossi A."/>
            <person name="Sena J.A.D."/>
            <person name="Silva C."/>
            <person name="de Souza R.F."/>
            <person name="Spinola L.A.F."/>
            <person name="Takita M.A."/>
            <person name="Tamura R.E."/>
            <person name="Teixeira E.C."/>
            <person name="Tezza R.I.D."/>
            <person name="Trindade dos Santos M."/>
            <person name="Truffi D."/>
            <person name="Tsai S.M."/>
            <person name="White F.F."/>
            <person name="Setubal J.C."/>
            <person name="Kitajima J.P."/>
        </authorList>
    </citation>
    <scope>NUCLEOTIDE SEQUENCE [LARGE SCALE GENOMIC DNA]</scope>
    <source>
        <strain>ATCC 33913 / DSM 3586 / NCPPB 528 / LMG 568 / P 25</strain>
    </source>
</reference>
<gene>
    <name type="ordered locus">XCC0220</name>
</gene>
<dbReference type="EMBL" id="AE008922">
    <property type="protein sequence ID" value="AAM39539.1"/>
    <property type="molecule type" value="Genomic_DNA"/>
</dbReference>
<dbReference type="RefSeq" id="NP_635615.1">
    <property type="nucleotide sequence ID" value="NC_003902.1"/>
</dbReference>
<dbReference type="RefSeq" id="WP_003468167.1">
    <property type="nucleotide sequence ID" value="NC_003902.1"/>
</dbReference>
<dbReference type="EnsemblBacteria" id="AAM39539">
    <property type="protein sequence ID" value="AAM39539"/>
    <property type="gene ID" value="XCC0220"/>
</dbReference>
<dbReference type="KEGG" id="xcc:XCC0220"/>
<dbReference type="PATRIC" id="fig|190485.4.peg.247"/>
<dbReference type="eggNOG" id="COG5487">
    <property type="taxonomic scope" value="Bacteria"/>
</dbReference>
<dbReference type="HOGENOM" id="CLU_187346_0_1_6"/>
<dbReference type="OrthoDB" id="5461362at2"/>
<dbReference type="PRO" id="PR:Q7CLW2"/>
<dbReference type="Proteomes" id="UP000001010">
    <property type="component" value="Chromosome"/>
</dbReference>
<dbReference type="GO" id="GO:0005886">
    <property type="term" value="C:plasma membrane"/>
    <property type="evidence" value="ECO:0007669"/>
    <property type="project" value="UniProtKB-SubCell"/>
</dbReference>
<dbReference type="HAMAP" id="MF_01361">
    <property type="entry name" value="UPF0391"/>
    <property type="match status" value="1"/>
</dbReference>
<dbReference type="InterPro" id="IPR009760">
    <property type="entry name" value="DUF1328"/>
</dbReference>
<dbReference type="NCBIfam" id="NF010226">
    <property type="entry name" value="PRK13682.1-1"/>
    <property type="match status" value="1"/>
</dbReference>
<dbReference type="NCBIfam" id="NF010229">
    <property type="entry name" value="PRK13682.1-4"/>
    <property type="match status" value="1"/>
</dbReference>
<dbReference type="Pfam" id="PF07043">
    <property type="entry name" value="DUF1328"/>
    <property type="match status" value="1"/>
</dbReference>
<dbReference type="PIRSF" id="PIRSF036466">
    <property type="entry name" value="UCP036466"/>
    <property type="match status" value="1"/>
</dbReference>
<evidence type="ECO:0000255" key="1">
    <source>
        <dbReference type="HAMAP-Rule" id="MF_01361"/>
    </source>
</evidence>
<name>Y220_XANCP</name>
<comment type="subcellular location">
    <subcellularLocation>
        <location evidence="1">Cell membrane</location>
        <topology evidence="1">Multi-pass membrane protein</topology>
    </subcellularLocation>
</comment>
<comment type="similarity">
    <text evidence="1">Belongs to the UPF0391 family.</text>
</comment>
<sequence>MLHYAIIFFVIAIIAAVLGFSGIAGAATNIAWILFVVFLILAVISMFRRGKV</sequence>
<organism>
    <name type="scientific">Xanthomonas campestris pv. campestris (strain ATCC 33913 / DSM 3586 / NCPPB 528 / LMG 568 / P 25)</name>
    <dbReference type="NCBI Taxonomy" id="190485"/>
    <lineage>
        <taxon>Bacteria</taxon>
        <taxon>Pseudomonadati</taxon>
        <taxon>Pseudomonadota</taxon>
        <taxon>Gammaproteobacteria</taxon>
        <taxon>Lysobacterales</taxon>
        <taxon>Lysobacteraceae</taxon>
        <taxon>Xanthomonas</taxon>
    </lineage>
</organism>